<accession>O60682</accession>
<accession>O75946</accession>
<accession>Q53XZ2</accession>
<accession>Q9BRE7</accession>
<evidence type="ECO:0000255" key="1"/>
<evidence type="ECO:0000255" key="2">
    <source>
        <dbReference type="PROSITE-ProRule" id="PRU00981"/>
    </source>
</evidence>
<evidence type="ECO:0000256" key="3">
    <source>
        <dbReference type="SAM" id="MobiDB-lite"/>
    </source>
</evidence>
<evidence type="ECO:0000305" key="4"/>
<organism>
    <name type="scientific">Homo sapiens</name>
    <name type="common">Human</name>
    <dbReference type="NCBI Taxonomy" id="9606"/>
    <lineage>
        <taxon>Eukaryota</taxon>
        <taxon>Metazoa</taxon>
        <taxon>Chordata</taxon>
        <taxon>Craniata</taxon>
        <taxon>Vertebrata</taxon>
        <taxon>Euteleostomi</taxon>
        <taxon>Mammalia</taxon>
        <taxon>Eutheria</taxon>
        <taxon>Euarchontoglires</taxon>
        <taxon>Primates</taxon>
        <taxon>Haplorrhini</taxon>
        <taxon>Catarrhini</taxon>
        <taxon>Hominidae</taxon>
        <taxon>Homo</taxon>
    </lineage>
</organism>
<sequence length="206" mass="22068">MSTGSVSDPEEMELRGLQREYPVPASKRPPLRGVERSYASPSDNSSAEEEDPDGEEERCALGTAGSAEGCKRKRPRVAGGGGAGGSAGGGGKKPLPAKGSAAECKQSQRNAANARERARMRVLSKAFSRLKTSLPWVPPDTKLSKLDTLRLASSYIAHLRQLLQEDRYENGYVHPVNLTWPFVVSGRPDSDTKEVSAANRLCGTTA</sequence>
<feature type="chain" id="PRO_0000127283" description="Musculin">
    <location>
        <begin position="1"/>
        <end position="206"/>
    </location>
</feature>
<feature type="domain" description="bHLH" evidence="2">
    <location>
        <begin position="107"/>
        <end position="159"/>
    </location>
</feature>
<feature type="region of interest" description="Disordered" evidence="3">
    <location>
        <begin position="1"/>
        <end position="115"/>
    </location>
</feature>
<feature type="short sequence motif" description="Nuclear localization signal" evidence="1">
    <location>
        <begin position="71"/>
        <end position="76"/>
    </location>
</feature>
<feature type="compositionally biased region" description="Acidic residues" evidence="3">
    <location>
        <begin position="46"/>
        <end position="56"/>
    </location>
</feature>
<feature type="compositionally biased region" description="Gly residues" evidence="3">
    <location>
        <begin position="78"/>
        <end position="92"/>
    </location>
</feature>
<feature type="compositionally biased region" description="Low complexity" evidence="3">
    <location>
        <begin position="93"/>
        <end position="102"/>
    </location>
</feature>
<feature type="sequence conflict" description="In Ref. 5; AAC69870." evidence="4" ref="5">
    <original>V</original>
    <variation>G</variation>
    <location>
        <position position="77"/>
    </location>
</feature>
<feature type="sequence conflict" description="In Ref. 1." evidence="4" ref="1">
    <original>DSD</original>
    <variation>ASA</variation>
    <location>
        <begin position="189"/>
        <end position="191"/>
    </location>
</feature>
<protein>
    <recommendedName>
        <fullName>Musculin</fullName>
    </recommendedName>
    <alternativeName>
        <fullName>Activated B-cell factor 1</fullName>
        <shortName>ABF-1</shortName>
    </alternativeName>
    <alternativeName>
        <fullName>Class A basic helix-loop-helix protein 22</fullName>
        <shortName>bHLHa22</shortName>
    </alternativeName>
</protein>
<keyword id="KW-0238">DNA-binding</keyword>
<keyword id="KW-0539">Nucleus</keyword>
<keyword id="KW-1267">Proteomics identification</keyword>
<keyword id="KW-1185">Reference proteome</keyword>
<keyword id="KW-0678">Repressor</keyword>
<keyword id="KW-0804">Transcription</keyword>
<keyword id="KW-0805">Transcription regulation</keyword>
<reference key="1">
    <citation type="journal article" date="1998" name="Mol. Cell. Biol.">
        <title>Characterization of ABF-1, a novel basic helix-loop-helix transcription factor expressed in activated B lymphocytes.</title>
        <authorList>
            <person name="Massari M.E."/>
            <person name="Rivera R.R."/>
            <person name="Voland J.R."/>
            <person name="Quong M.W."/>
            <person name="Breit T.M."/>
            <person name="van Dongen J.J.M."/>
            <person name="de Smit O."/>
            <person name="Murre C."/>
        </authorList>
    </citation>
    <scope>NUCLEOTIDE SEQUENCE [MRNA]</scope>
    <scope>CHARACTERIZATION</scope>
    <source>
        <tissue>B-cell</tissue>
    </source>
</reference>
<reference key="2">
    <citation type="submission" date="2003-05" db="EMBL/GenBank/DDBJ databases">
        <title>Cloning of human full-length CDSs in BD Creator(TM) system donor vector.</title>
        <authorList>
            <person name="Kalnine N."/>
            <person name="Chen X."/>
            <person name="Rolfs A."/>
            <person name="Halleck A."/>
            <person name="Hines L."/>
            <person name="Eisenstein S."/>
            <person name="Koundinya M."/>
            <person name="Raphael J."/>
            <person name="Moreira D."/>
            <person name="Kelley T."/>
            <person name="LaBaer J."/>
            <person name="Lin Y."/>
            <person name="Phelan M."/>
            <person name="Farmer A."/>
        </authorList>
    </citation>
    <scope>NUCLEOTIDE SEQUENCE [LARGE SCALE MRNA]</scope>
</reference>
<reference key="3">
    <citation type="submission" date="2005-07" db="EMBL/GenBank/DDBJ databases">
        <authorList>
            <person name="Mural R.J."/>
            <person name="Istrail S."/>
            <person name="Sutton G.G."/>
            <person name="Florea L."/>
            <person name="Halpern A.L."/>
            <person name="Mobarry C.M."/>
            <person name="Lippert R."/>
            <person name="Walenz B."/>
            <person name="Shatkay H."/>
            <person name="Dew I."/>
            <person name="Miller J.R."/>
            <person name="Flanigan M.J."/>
            <person name="Edwards N.J."/>
            <person name="Bolanos R."/>
            <person name="Fasulo D."/>
            <person name="Halldorsson B.V."/>
            <person name="Hannenhalli S."/>
            <person name="Turner R."/>
            <person name="Yooseph S."/>
            <person name="Lu F."/>
            <person name="Nusskern D.R."/>
            <person name="Shue B.C."/>
            <person name="Zheng X.H."/>
            <person name="Zhong F."/>
            <person name="Delcher A.L."/>
            <person name="Huson D.H."/>
            <person name="Kravitz S.A."/>
            <person name="Mouchard L."/>
            <person name="Reinert K."/>
            <person name="Remington K.A."/>
            <person name="Clark A.G."/>
            <person name="Waterman M.S."/>
            <person name="Eichler E.E."/>
            <person name="Adams M.D."/>
            <person name="Hunkapiller M.W."/>
            <person name="Myers E.W."/>
            <person name="Venter J.C."/>
        </authorList>
    </citation>
    <scope>NUCLEOTIDE SEQUENCE [LARGE SCALE GENOMIC DNA]</scope>
</reference>
<reference key="4">
    <citation type="journal article" date="2004" name="Genome Res.">
        <title>The status, quality, and expansion of the NIH full-length cDNA project: the Mammalian Gene Collection (MGC).</title>
        <authorList>
            <consortium name="The MGC Project Team"/>
        </authorList>
    </citation>
    <scope>NUCLEOTIDE SEQUENCE [LARGE SCALE MRNA]</scope>
    <source>
        <tissue>Muscle</tissue>
        <tissue>Placenta</tissue>
    </source>
</reference>
<reference key="5">
    <citation type="journal article" date="1998" name="Mech. Dev.">
        <title>Musculin: a murine basic helix-loop-helix transcription factor gene expressed in embryonic skeletal muscle.</title>
        <authorList>
            <person name="Robb L."/>
            <person name="Hartley L."/>
            <person name="Wang C.-C."/>
            <person name="Harvey R.P."/>
            <person name="Begley C.G."/>
        </authorList>
    </citation>
    <scope>NUCLEOTIDE SEQUENCE [MRNA] OF 6-206</scope>
    <source>
        <tissue>Placenta</tissue>
    </source>
</reference>
<proteinExistence type="evidence at protein level"/>
<gene>
    <name type="primary">MSC</name>
    <name type="synonym">ABF1</name>
    <name type="synonym">BHLHA22</name>
</gene>
<dbReference type="EMBL" id="AF060154">
    <property type="protein sequence ID" value="AAC15071.1"/>
    <property type="status" value="ALT_FRAME"/>
    <property type="molecule type" value="mRNA"/>
</dbReference>
<dbReference type="EMBL" id="BT007169">
    <property type="protein sequence ID" value="AAP35833.1"/>
    <property type="molecule type" value="mRNA"/>
</dbReference>
<dbReference type="EMBL" id="CH471068">
    <property type="protein sequence ID" value="EAW86984.1"/>
    <property type="molecule type" value="Genomic_DNA"/>
</dbReference>
<dbReference type="EMBL" id="BC006313">
    <property type="protein sequence ID" value="AAH06313.1"/>
    <property type="molecule type" value="mRNA"/>
</dbReference>
<dbReference type="EMBL" id="BC067827">
    <property type="protein sequence ID" value="AAH67827.1"/>
    <property type="molecule type" value="mRNA"/>
</dbReference>
<dbReference type="EMBL" id="AF087036">
    <property type="protein sequence ID" value="AAC69870.1"/>
    <property type="molecule type" value="mRNA"/>
</dbReference>
<dbReference type="CCDS" id="CCDS43746.1"/>
<dbReference type="RefSeq" id="NP_005089.2">
    <property type="nucleotide sequence ID" value="NM_005098.4"/>
</dbReference>
<dbReference type="SMR" id="O60682"/>
<dbReference type="BioGRID" id="114669">
    <property type="interactions" value="13"/>
</dbReference>
<dbReference type="FunCoup" id="O60682">
    <property type="interactions" value="1198"/>
</dbReference>
<dbReference type="IntAct" id="O60682">
    <property type="interactions" value="10"/>
</dbReference>
<dbReference type="STRING" id="9606.ENSP00000321445"/>
<dbReference type="GlyGen" id="O60682">
    <property type="glycosylation" value="1 site, 1 O-linked glycan (1 site)"/>
</dbReference>
<dbReference type="iPTMnet" id="O60682"/>
<dbReference type="PhosphoSitePlus" id="O60682"/>
<dbReference type="BioMuta" id="MSC"/>
<dbReference type="jPOST" id="O60682"/>
<dbReference type="MassIVE" id="O60682"/>
<dbReference type="PaxDb" id="9606-ENSP00000321445"/>
<dbReference type="PeptideAtlas" id="O60682"/>
<dbReference type="ProteomicsDB" id="49524"/>
<dbReference type="Antibodypedia" id="25121">
    <property type="antibodies" value="238 antibodies from 29 providers"/>
</dbReference>
<dbReference type="DNASU" id="9242"/>
<dbReference type="Ensembl" id="ENST00000325509.5">
    <property type="protein sequence ID" value="ENSP00000321445.4"/>
    <property type="gene ID" value="ENSG00000178860.9"/>
</dbReference>
<dbReference type="GeneID" id="9242"/>
<dbReference type="KEGG" id="hsa:9242"/>
<dbReference type="MANE-Select" id="ENST00000325509.5">
    <property type="protein sequence ID" value="ENSP00000321445.4"/>
    <property type="RefSeq nucleotide sequence ID" value="NM_005098.4"/>
    <property type="RefSeq protein sequence ID" value="NP_005089.2"/>
</dbReference>
<dbReference type="UCSC" id="uc003xyx.2">
    <property type="organism name" value="human"/>
</dbReference>
<dbReference type="AGR" id="HGNC:7321"/>
<dbReference type="CTD" id="9242"/>
<dbReference type="DisGeNET" id="9242"/>
<dbReference type="GeneCards" id="MSC"/>
<dbReference type="HGNC" id="HGNC:7321">
    <property type="gene designation" value="MSC"/>
</dbReference>
<dbReference type="HPA" id="ENSG00000178860">
    <property type="expression patterns" value="Low tissue specificity"/>
</dbReference>
<dbReference type="MIM" id="603628">
    <property type="type" value="gene"/>
</dbReference>
<dbReference type="neXtProt" id="NX_O60682"/>
<dbReference type="OpenTargets" id="ENSG00000178860"/>
<dbReference type="PharmGKB" id="PA31130"/>
<dbReference type="VEuPathDB" id="HostDB:ENSG00000178860"/>
<dbReference type="eggNOG" id="KOG4029">
    <property type="taxonomic scope" value="Eukaryota"/>
</dbReference>
<dbReference type="GeneTree" id="ENSGT00940000160438"/>
<dbReference type="HOGENOM" id="CLU_092663_1_0_1"/>
<dbReference type="InParanoid" id="O60682"/>
<dbReference type="OMA" id="AECKQTQ"/>
<dbReference type="OrthoDB" id="6233288at2759"/>
<dbReference type="PAN-GO" id="O60682">
    <property type="GO annotations" value="4 GO annotations based on evolutionary models"/>
</dbReference>
<dbReference type="PhylomeDB" id="O60682"/>
<dbReference type="TreeFam" id="TF350742"/>
<dbReference type="PathwayCommons" id="O60682"/>
<dbReference type="SignaLink" id="O60682"/>
<dbReference type="SIGNOR" id="O60682"/>
<dbReference type="BioGRID-ORCS" id="9242">
    <property type="hits" value="7 hits in 1166 CRISPR screens"/>
</dbReference>
<dbReference type="ChiTaRS" id="MSC">
    <property type="organism name" value="human"/>
</dbReference>
<dbReference type="GeneWiki" id="MSC_(gene)"/>
<dbReference type="GenomeRNAi" id="9242"/>
<dbReference type="Pharos" id="O60682">
    <property type="development level" value="Tbio"/>
</dbReference>
<dbReference type="PRO" id="PR:O60682"/>
<dbReference type="Proteomes" id="UP000005640">
    <property type="component" value="Chromosome 8"/>
</dbReference>
<dbReference type="RNAct" id="O60682">
    <property type="molecule type" value="protein"/>
</dbReference>
<dbReference type="Bgee" id="ENSG00000178860">
    <property type="expression patterns" value="Expressed in right coronary artery and 99 other cell types or tissues"/>
</dbReference>
<dbReference type="GO" id="GO:0000785">
    <property type="term" value="C:chromatin"/>
    <property type="evidence" value="ECO:0000247"/>
    <property type="project" value="NTNU_SB"/>
</dbReference>
<dbReference type="GO" id="GO:0005654">
    <property type="term" value="C:nucleoplasm"/>
    <property type="evidence" value="ECO:0000314"/>
    <property type="project" value="HPA"/>
</dbReference>
<dbReference type="GO" id="GO:0005634">
    <property type="term" value="C:nucleus"/>
    <property type="evidence" value="ECO:0000304"/>
    <property type="project" value="ProtInc"/>
</dbReference>
<dbReference type="GO" id="GO:0003700">
    <property type="term" value="F:DNA-binding transcription factor activity"/>
    <property type="evidence" value="ECO:0000304"/>
    <property type="project" value="GO_Central"/>
</dbReference>
<dbReference type="GO" id="GO:0000981">
    <property type="term" value="F:DNA-binding transcription factor activity, RNA polymerase II-specific"/>
    <property type="evidence" value="ECO:0000247"/>
    <property type="project" value="NTNU_SB"/>
</dbReference>
<dbReference type="GO" id="GO:0001227">
    <property type="term" value="F:DNA-binding transcription repressor activity, RNA polymerase II-specific"/>
    <property type="evidence" value="ECO:0007669"/>
    <property type="project" value="Ensembl"/>
</dbReference>
<dbReference type="GO" id="GO:0046983">
    <property type="term" value="F:protein dimerization activity"/>
    <property type="evidence" value="ECO:0007669"/>
    <property type="project" value="InterPro"/>
</dbReference>
<dbReference type="GO" id="GO:0000978">
    <property type="term" value="F:RNA polymerase II cis-regulatory region sequence-specific DNA binding"/>
    <property type="evidence" value="ECO:0000314"/>
    <property type="project" value="GO_Central"/>
</dbReference>
<dbReference type="GO" id="GO:0000977">
    <property type="term" value="F:RNA polymerase II transcription regulatory region sequence-specific DNA binding"/>
    <property type="evidence" value="ECO:0000318"/>
    <property type="project" value="GO_Central"/>
</dbReference>
<dbReference type="GO" id="GO:1990837">
    <property type="term" value="F:sequence-specific double-stranded DNA binding"/>
    <property type="evidence" value="ECO:0000314"/>
    <property type="project" value="ARUK-UCL"/>
</dbReference>
<dbReference type="GO" id="GO:0014707">
    <property type="term" value="P:branchiomeric skeletal muscle development"/>
    <property type="evidence" value="ECO:0007669"/>
    <property type="project" value="Ensembl"/>
</dbReference>
<dbReference type="GO" id="GO:0003161">
    <property type="term" value="P:cardiac conduction system development"/>
    <property type="evidence" value="ECO:0000303"/>
    <property type="project" value="BHF-UCL"/>
</dbReference>
<dbReference type="GO" id="GO:1990830">
    <property type="term" value="P:cellular response to leukemia inhibitory factor"/>
    <property type="evidence" value="ECO:0007669"/>
    <property type="project" value="Ensembl"/>
</dbReference>
<dbReference type="GO" id="GO:0060539">
    <property type="term" value="P:diaphragm development"/>
    <property type="evidence" value="ECO:0007669"/>
    <property type="project" value="Ensembl"/>
</dbReference>
<dbReference type="GO" id="GO:0006355">
    <property type="term" value="P:regulation of DNA-templated transcription"/>
    <property type="evidence" value="ECO:0000304"/>
    <property type="project" value="GO_Central"/>
</dbReference>
<dbReference type="GO" id="GO:0006357">
    <property type="term" value="P:regulation of transcription by RNA polymerase II"/>
    <property type="evidence" value="ECO:0000318"/>
    <property type="project" value="GO_Central"/>
</dbReference>
<dbReference type="GO" id="GO:0060021">
    <property type="term" value="P:roof of mouth development"/>
    <property type="evidence" value="ECO:0007669"/>
    <property type="project" value="Ensembl"/>
</dbReference>
<dbReference type="GO" id="GO:0007519">
    <property type="term" value="P:skeletal muscle tissue development"/>
    <property type="evidence" value="ECO:0000318"/>
    <property type="project" value="GO_Central"/>
</dbReference>
<dbReference type="CDD" id="cd19703">
    <property type="entry name" value="bHLH_TS_musculin"/>
    <property type="match status" value="1"/>
</dbReference>
<dbReference type="FunFam" id="4.10.280.10:FF:000010">
    <property type="entry name" value="Scleraxis bHLH transcription factor"/>
    <property type="match status" value="1"/>
</dbReference>
<dbReference type="Gene3D" id="4.10.280.10">
    <property type="entry name" value="Helix-loop-helix DNA-binding domain"/>
    <property type="match status" value="1"/>
</dbReference>
<dbReference type="InterPro" id="IPR011598">
    <property type="entry name" value="bHLH_dom"/>
</dbReference>
<dbReference type="InterPro" id="IPR050283">
    <property type="entry name" value="E-box_TF_Regulators"/>
</dbReference>
<dbReference type="InterPro" id="IPR036638">
    <property type="entry name" value="HLH_DNA-bd_sf"/>
</dbReference>
<dbReference type="PANTHER" id="PTHR23349">
    <property type="entry name" value="BASIC HELIX-LOOP-HELIX TRANSCRIPTION FACTOR, TWIST"/>
    <property type="match status" value="1"/>
</dbReference>
<dbReference type="PANTHER" id="PTHR23349:SF62">
    <property type="entry name" value="MUSCULIN"/>
    <property type="match status" value="1"/>
</dbReference>
<dbReference type="Pfam" id="PF00010">
    <property type="entry name" value="HLH"/>
    <property type="match status" value="1"/>
</dbReference>
<dbReference type="SMART" id="SM00353">
    <property type="entry name" value="HLH"/>
    <property type="match status" value="1"/>
</dbReference>
<dbReference type="SUPFAM" id="SSF47459">
    <property type="entry name" value="HLH, helix-loop-helix DNA-binding domain"/>
    <property type="match status" value="1"/>
</dbReference>
<dbReference type="PROSITE" id="PS50888">
    <property type="entry name" value="BHLH"/>
    <property type="match status" value="1"/>
</dbReference>
<comment type="function">
    <text>Transcription repressor capable of inhibiting the transactivation capability of TCF3/E47. May play a role in regulating antigen-dependent B-cell differentiation.</text>
</comment>
<comment type="subunit">
    <text>Efficient DNA binding requires dimerization with another bHLH protein. Binds DNA as a homodimer or a heterodimer. Forms a heterodimer with TCF3.</text>
</comment>
<comment type="interaction">
    <interactant intactId="EBI-740310">
        <id>O60682</id>
    </interactant>
    <interactant intactId="EBI-739467">
        <id>Q9H8Y8</id>
        <label>GORASP2</label>
    </interactant>
    <organismsDiffer>false</organismsDiffer>
    <experiments>5</experiments>
</comment>
<comment type="interaction">
    <interactant intactId="EBI-740310">
        <id>O60682</id>
    </interactant>
    <interactant intactId="EBI-739832">
        <id>Q8TBB1</id>
        <label>LNX1</label>
    </interactant>
    <organismsDiffer>false</organismsDiffer>
    <experiments>3</experiments>
</comment>
<comment type="interaction">
    <interactant intactId="EBI-740310">
        <id>O60682</id>
    </interactant>
    <interactant intactId="EBI-348489">
        <id>P40425</id>
        <label>PBX2</label>
    </interactant>
    <organismsDiffer>false</organismsDiffer>
    <experiments>3</experiments>
</comment>
<comment type="interaction">
    <interactant intactId="EBI-740310">
        <id>O60682</id>
    </interactant>
    <interactant intactId="EBI-11952764">
        <id>Q99081-3</id>
        <label>TCF12</label>
    </interactant>
    <organismsDiffer>false</organismsDiffer>
    <experiments>3</experiments>
</comment>
<comment type="interaction">
    <interactant intactId="EBI-740310">
        <id>O60682</id>
    </interactant>
    <interactant intactId="EBI-13636688">
        <id>P15884-3</id>
        <label>TCF4</label>
    </interactant>
    <organismsDiffer>false</organismsDiffer>
    <experiments>3</experiments>
</comment>
<comment type="subcellular location">
    <subcellularLocation>
        <location>Nucleus</location>
    </subcellularLocation>
</comment>
<comment type="tissue specificity">
    <text>Expressed in lymphoid tissues, B-cell lines and activated B-cells.</text>
</comment>
<comment type="sequence caution" evidence="4">
    <conflict type="frameshift">
        <sequence resource="EMBL-CDS" id="AAC15071"/>
    </conflict>
</comment>
<name>MUSC_HUMAN</name>